<organismHost>
    <name type="scientific">Acanthamoeba polyphaga</name>
    <name type="common">Amoeba</name>
    <dbReference type="NCBI Taxonomy" id="5757"/>
</organismHost>
<reference key="1">
    <citation type="journal article" date="2004" name="Science">
        <title>The 1.2-megabase genome sequence of Mimivirus.</title>
        <authorList>
            <person name="Raoult D."/>
            <person name="Audic S."/>
            <person name="Robert C."/>
            <person name="Abergel C."/>
            <person name="Renesto P."/>
            <person name="Ogata H."/>
            <person name="La Scola B."/>
            <person name="Susan M."/>
            <person name="Claverie J.-M."/>
        </authorList>
    </citation>
    <scope>NUCLEOTIDE SEQUENCE [LARGE SCALE GENOMIC DNA]</scope>
    <source>
        <strain>Rowbotham-Bradford</strain>
    </source>
</reference>
<gene>
    <name type="ordered locus">MIMI_L483</name>
</gene>
<feature type="chain" id="PRO_0000067171" description="Putative ankyrin repeat protein L483">
    <location>
        <begin position="1"/>
        <end position="408"/>
    </location>
</feature>
<feature type="repeat" description="ANK 1">
    <location>
        <begin position="78"/>
        <end position="107"/>
    </location>
</feature>
<feature type="repeat" description="ANK 2">
    <location>
        <begin position="108"/>
        <end position="137"/>
    </location>
</feature>
<feature type="repeat" description="ANK 3">
    <location>
        <begin position="139"/>
        <end position="167"/>
    </location>
</feature>
<feature type="repeat" description="ANK 4">
    <location>
        <begin position="168"/>
        <end position="197"/>
    </location>
</feature>
<feature type="repeat" description="ANK 5">
    <location>
        <begin position="198"/>
        <end position="227"/>
    </location>
</feature>
<feature type="repeat" description="ANK 6">
    <location>
        <begin position="229"/>
        <end position="257"/>
    </location>
</feature>
<feature type="repeat" description="ANK 7">
    <location>
        <begin position="259"/>
        <end position="287"/>
    </location>
</feature>
<feature type="repeat" description="ANK 8">
    <location>
        <begin position="288"/>
        <end position="317"/>
    </location>
</feature>
<feature type="repeat" description="ANK 9">
    <location>
        <begin position="318"/>
        <end position="347"/>
    </location>
</feature>
<feature type="repeat" description="ANK 10">
    <location>
        <begin position="349"/>
        <end position="377"/>
    </location>
</feature>
<feature type="repeat" description="ANK 11">
    <location>
        <begin position="378"/>
        <end position="407"/>
    </location>
</feature>
<protein>
    <recommendedName>
        <fullName>Putative ankyrin repeat protein L483</fullName>
    </recommendedName>
</protein>
<organism>
    <name type="scientific">Acanthamoeba polyphaga mimivirus</name>
    <name type="common">APMV</name>
    <dbReference type="NCBI Taxonomy" id="212035"/>
    <lineage>
        <taxon>Viruses</taxon>
        <taxon>Varidnaviria</taxon>
        <taxon>Bamfordvirae</taxon>
        <taxon>Nucleocytoviricota</taxon>
        <taxon>Megaviricetes</taxon>
        <taxon>Imitervirales</taxon>
        <taxon>Mimiviridae</taxon>
        <taxon>Megamimivirinae</taxon>
        <taxon>Mimivirus</taxon>
        <taxon>Mimivirus bradfordmassiliense</taxon>
    </lineage>
</organism>
<name>YL483_MIMIV</name>
<proteinExistence type="predicted"/>
<dbReference type="EMBL" id="AY653733">
    <property type="protein sequence ID" value="AAV50749.1"/>
    <property type="molecule type" value="Genomic_DNA"/>
</dbReference>
<dbReference type="SMR" id="Q5UQF1"/>
<dbReference type="KEGG" id="vg:9925110"/>
<dbReference type="OrthoDB" id="38654at10239"/>
<dbReference type="Proteomes" id="UP000001134">
    <property type="component" value="Genome"/>
</dbReference>
<dbReference type="Gene3D" id="1.25.40.20">
    <property type="entry name" value="Ankyrin repeat-containing domain"/>
    <property type="match status" value="4"/>
</dbReference>
<dbReference type="InterPro" id="IPR002110">
    <property type="entry name" value="Ankyrin_rpt"/>
</dbReference>
<dbReference type="InterPro" id="IPR036770">
    <property type="entry name" value="Ankyrin_rpt-contain_sf"/>
</dbReference>
<dbReference type="PANTHER" id="PTHR24188">
    <property type="entry name" value="ANKYRIN REPEAT PROTEIN"/>
    <property type="match status" value="1"/>
</dbReference>
<dbReference type="PANTHER" id="PTHR24188:SF29">
    <property type="entry name" value="GH09064P"/>
    <property type="match status" value="1"/>
</dbReference>
<dbReference type="Pfam" id="PF00023">
    <property type="entry name" value="Ank"/>
    <property type="match status" value="1"/>
</dbReference>
<dbReference type="Pfam" id="PF12796">
    <property type="entry name" value="Ank_2"/>
    <property type="match status" value="3"/>
</dbReference>
<dbReference type="Pfam" id="PF13637">
    <property type="entry name" value="Ank_4"/>
    <property type="match status" value="1"/>
</dbReference>
<dbReference type="SMART" id="SM00248">
    <property type="entry name" value="ANK"/>
    <property type="match status" value="11"/>
</dbReference>
<dbReference type="SUPFAM" id="SSF48403">
    <property type="entry name" value="Ankyrin repeat"/>
    <property type="match status" value="1"/>
</dbReference>
<dbReference type="PROSITE" id="PS50297">
    <property type="entry name" value="ANK_REP_REGION"/>
    <property type="match status" value="1"/>
</dbReference>
<dbReference type="PROSITE" id="PS50088">
    <property type="entry name" value="ANK_REPEAT"/>
    <property type="match status" value="8"/>
</dbReference>
<accession>Q5UQF1</accession>
<keyword id="KW-0040">ANK repeat</keyword>
<keyword id="KW-1185">Reference proteome</keyword>
<keyword id="KW-0677">Repeat</keyword>
<sequence>MYDILQPELWVKIIDYSGEINLLLTDKNFFELFNLIDTKVDVVEYIVKNNLIDALKYFILLKKLRHPIMEKNIVTIKSLNKCLIKSCKKNKLNIIKYLVSLGADIKAGDDCAVQLASQNGHLEVIEYLVAQGANIRADNDYAVIWASRNGYLDIVKYLVSQGADIRANNDYAVRWASRNGHLKVVKYLVSLGANIRTENDYAIKYASENGYLRIVEYLVSQGADIRADNDYAVGLASSNGHFEVVEYLVSQGANIRVDNDYAVRLASSNGHLEVVKYLVSLRANIRARCDFAIKWSSSNGHLEVVKYLVSQGADIRSQNDYAVRYASTNGHLEVVKYLVGQGADIRTGDDYAVRWASRGGCLEVVKYLVDQGANIRAKDDYAVKWASEKGHLEIVKFLISQGAVLTKN</sequence>